<dbReference type="EC" id="3.5.4.19" evidence="1"/>
<dbReference type="EMBL" id="CP000099">
    <property type="protein sequence ID" value="AAZ72518.1"/>
    <property type="molecule type" value="Genomic_DNA"/>
</dbReference>
<dbReference type="SMR" id="Q465C4"/>
<dbReference type="STRING" id="269797.Mbar_A3654"/>
<dbReference type="PaxDb" id="269797-Mbar_A3654"/>
<dbReference type="KEGG" id="mba:Mbar_A3654"/>
<dbReference type="eggNOG" id="arCOG02676">
    <property type="taxonomic scope" value="Archaea"/>
</dbReference>
<dbReference type="HOGENOM" id="CLU_048577_5_0_2"/>
<dbReference type="UniPathway" id="UPA00031">
    <property type="reaction ID" value="UER00008"/>
</dbReference>
<dbReference type="GO" id="GO:0005737">
    <property type="term" value="C:cytoplasm"/>
    <property type="evidence" value="ECO:0007669"/>
    <property type="project" value="UniProtKB-SubCell"/>
</dbReference>
<dbReference type="GO" id="GO:0000287">
    <property type="term" value="F:magnesium ion binding"/>
    <property type="evidence" value="ECO:0007669"/>
    <property type="project" value="UniProtKB-UniRule"/>
</dbReference>
<dbReference type="GO" id="GO:0004635">
    <property type="term" value="F:phosphoribosyl-AMP cyclohydrolase activity"/>
    <property type="evidence" value="ECO:0007669"/>
    <property type="project" value="UniProtKB-UniRule"/>
</dbReference>
<dbReference type="GO" id="GO:0008270">
    <property type="term" value="F:zinc ion binding"/>
    <property type="evidence" value="ECO:0007669"/>
    <property type="project" value="UniProtKB-UniRule"/>
</dbReference>
<dbReference type="GO" id="GO:0000105">
    <property type="term" value="P:L-histidine biosynthetic process"/>
    <property type="evidence" value="ECO:0007669"/>
    <property type="project" value="UniProtKB-UniRule"/>
</dbReference>
<dbReference type="FunFam" id="3.10.20.810:FF:000001">
    <property type="entry name" value="Histidine biosynthesis bifunctional protein HisIE"/>
    <property type="match status" value="1"/>
</dbReference>
<dbReference type="Gene3D" id="4.10.80.70">
    <property type="match status" value="1"/>
</dbReference>
<dbReference type="Gene3D" id="3.10.20.810">
    <property type="entry name" value="Phosphoribosyl-AMP cyclohydrolase"/>
    <property type="match status" value="1"/>
</dbReference>
<dbReference type="HAMAP" id="MF_01021">
    <property type="entry name" value="HisI"/>
    <property type="match status" value="1"/>
</dbReference>
<dbReference type="InterPro" id="IPR026660">
    <property type="entry name" value="PRA-CH"/>
</dbReference>
<dbReference type="InterPro" id="IPR002496">
    <property type="entry name" value="PRib_AMP_CycHydrolase_dom"/>
</dbReference>
<dbReference type="InterPro" id="IPR038019">
    <property type="entry name" value="PRib_AMP_CycHydrolase_sf"/>
</dbReference>
<dbReference type="NCBIfam" id="NF000768">
    <property type="entry name" value="PRK00051.1"/>
    <property type="match status" value="1"/>
</dbReference>
<dbReference type="PANTHER" id="PTHR42945">
    <property type="entry name" value="HISTIDINE BIOSYNTHESIS BIFUNCTIONAL PROTEIN"/>
    <property type="match status" value="1"/>
</dbReference>
<dbReference type="PANTHER" id="PTHR42945:SF1">
    <property type="entry name" value="HISTIDINE BIOSYNTHESIS BIFUNCTIONAL PROTEIN HIS7"/>
    <property type="match status" value="1"/>
</dbReference>
<dbReference type="Pfam" id="PF01502">
    <property type="entry name" value="PRA-CH"/>
    <property type="match status" value="1"/>
</dbReference>
<dbReference type="SUPFAM" id="SSF141734">
    <property type="entry name" value="HisI-like"/>
    <property type="match status" value="1"/>
</dbReference>
<evidence type="ECO:0000255" key="1">
    <source>
        <dbReference type="HAMAP-Rule" id="MF_01021"/>
    </source>
</evidence>
<keyword id="KW-0028">Amino-acid biosynthesis</keyword>
<keyword id="KW-0963">Cytoplasm</keyword>
<keyword id="KW-0368">Histidine biosynthesis</keyword>
<keyword id="KW-0378">Hydrolase</keyword>
<keyword id="KW-0460">Magnesium</keyword>
<keyword id="KW-0479">Metal-binding</keyword>
<keyword id="KW-0862">Zinc</keyword>
<reference key="1">
    <citation type="journal article" date="2006" name="J. Bacteriol.">
        <title>The Methanosarcina barkeri genome: comparative analysis with Methanosarcina acetivorans and Methanosarcina mazei reveals extensive rearrangement within methanosarcinal genomes.</title>
        <authorList>
            <person name="Maeder D.L."/>
            <person name="Anderson I."/>
            <person name="Brettin T.S."/>
            <person name="Bruce D.C."/>
            <person name="Gilna P."/>
            <person name="Han C.S."/>
            <person name="Lapidus A."/>
            <person name="Metcalf W.W."/>
            <person name="Saunders E."/>
            <person name="Tapia R."/>
            <person name="Sowers K.R."/>
        </authorList>
    </citation>
    <scope>NUCLEOTIDE SEQUENCE [LARGE SCALE GENOMIC DNA]</scope>
    <source>
        <strain>Fusaro / DSM 804</strain>
    </source>
</reference>
<protein>
    <recommendedName>
        <fullName evidence="1">Phosphoribosyl-AMP cyclohydrolase</fullName>
        <shortName evidence="1">PRA-CH</shortName>
        <ecNumber evidence="1">3.5.4.19</ecNumber>
    </recommendedName>
</protein>
<comment type="function">
    <text evidence="1">Catalyzes the hydrolysis of the adenine ring of phosphoribosyl-AMP.</text>
</comment>
<comment type="catalytic activity">
    <reaction evidence="1">
        <text>1-(5-phospho-beta-D-ribosyl)-5'-AMP + H2O = 1-(5-phospho-beta-D-ribosyl)-5-[(5-phospho-beta-D-ribosylamino)methylideneamino]imidazole-4-carboxamide</text>
        <dbReference type="Rhea" id="RHEA:20049"/>
        <dbReference type="ChEBI" id="CHEBI:15377"/>
        <dbReference type="ChEBI" id="CHEBI:58435"/>
        <dbReference type="ChEBI" id="CHEBI:59457"/>
        <dbReference type="EC" id="3.5.4.19"/>
    </reaction>
</comment>
<comment type="cofactor">
    <cofactor evidence="1">
        <name>Mg(2+)</name>
        <dbReference type="ChEBI" id="CHEBI:18420"/>
    </cofactor>
    <text evidence="1">Binds 1 Mg(2+) ion per subunit.</text>
</comment>
<comment type="cofactor">
    <cofactor evidence="1">
        <name>Zn(2+)</name>
        <dbReference type="ChEBI" id="CHEBI:29105"/>
    </cofactor>
    <text evidence="1">Binds 1 zinc ion per subunit.</text>
</comment>
<comment type="pathway">
    <text evidence="1">Amino-acid biosynthesis; L-histidine biosynthesis; L-histidine from 5-phospho-alpha-D-ribose 1-diphosphate: step 3/9.</text>
</comment>
<comment type="subunit">
    <text evidence="1">Homodimer.</text>
</comment>
<comment type="subcellular location">
    <subcellularLocation>
        <location evidence="1">Cytoplasm</location>
    </subcellularLocation>
</comment>
<comment type="similarity">
    <text evidence="1">Belongs to the PRA-CH family.</text>
</comment>
<gene>
    <name evidence="1" type="primary">hisI</name>
    <name type="ordered locus">Mbar_A3654</name>
</gene>
<accession>Q465C4</accession>
<proteinExistence type="inferred from homology"/>
<organism>
    <name type="scientific">Methanosarcina barkeri (strain Fusaro / DSM 804)</name>
    <dbReference type="NCBI Taxonomy" id="269797"/>
    <lineage>
        <taxon>Archaea</taxon>
        <taxon>Methanobacteriati</taxon>
        <taxon>Methanobacteriota</taxon>
        <taxon>Stenosarchaea group</taxon>
        <taxon>Methanomicrobia</taxon>
        <taxon>Methanosarcinales</taxon>
        <taxon>Methanosarcinaceae</taxon>
        <taxon>Methanosarcina</taxon>
    </lineage>
</organism>
<name>HIS3_METBF</name>
<feature type="chain" id="PRO_0000229846" description="Phosphoribosyl-AMP cyclohydrolase">
    <location>
        <begin position="1"/>
        <end position="129"/>
    </location>
</feature>
<feature type="binding site" evidence="1">
    <location>
        <position position="82"/>
    </location>
    <ligand>
        <name>Mg(2+)</name>
        <dbReference type="ChEBI" id="CHEBI:18420"/>
    </ligand>
</feature>
<feature type="binding site" evidence="1">
    <location>
        <position position="83"/>
    </location>
    <ligand>
        <name>Zn(2+)</name>
        <dbReference type="ChEBI" id="CHEBI:29105"/>
        <note>ligand shared between dimeric partners</note>
    </ligand>
</feature>
<feature type="binding site" evidence="1">
    <location>
        <position position="84"/>
    </location>
    <ligand>
        <name>Mg(2+)</name>
        <dbReference type="ChEBI" id="CHEBI:18420"/>
    </ligand>
</feature>
<feature type="binding site" evidence="1">
    <location>
        <position position="86"/>
    </location>
    <ligand>
        <name>Mg(2+)</name>
        <dbReference type="ChEBI" id="CHEBI:18420"/>
    </ligand>
</feature>
<feature type="binding site" evidence="1">
    <location>
        <position position="99"/>
    </location>
    <ligand>
        <name>Zn(2+)</name>
        <dbReference type="ChEBI" id="CHEBI:29105"/>
        <note>ligand shared between dimeric partners</note>
    </ligand>
</feature>
<feature type="binding site" evidence="1">
    <location>
        <position position="106"/>
    </location>
    <ligand>
        <name>Zn(2+)</name>
        <dbReference type="ChEBI" id="CHEBI:29105"/>
        <note>ligand shared between dimeric partners</note>
    </ligand>
</feature>
<sequence>MFCNLSPMIDFDALKSEKGLILAVVQDQLSREVLMCAYMNREALEKTVETGITHFWSRSRQQLWKKGETSGHVQKVKEIRVDCDMDSLLLLVEQVGGACHMGYRSCFYRNLEGEVVGEKVFEPDEVYKS</sequence>